<organism>
    <name type="scientific">Stenotrophomonas maltophilia (strain K279a)</name>
    <dbReference type="NCBI Taxonomy" id="522373"/>
    <lineage>
        <taxon>Bacteria</taxon>
        <taxon>Pseudomonadati</taxon>
        <taxon>Pseudomonadota</taxon>
        <taxon>Gammaproteobacteria</taxon>
        <taxon>Lysobacterales</taxon>
        <taxon>Lysobacteraceae</taxon>
        <taxon>Stenotrophomonas</taxon>
        <taxon>Stenotrophomonas maltophilia group</taxon>
    </lineage>
</organism>
<sequence>MSEVANEASRRRTFAIISHPDAGKTTLTEKLLLFGGAIQMAGSVKGRKAARHATSDWMALEKERGISVTSSVMQFPYEDKIVNLLDTPGHADFGEDTYRVLTAVDSALMVIDVAKGVEERTIKLMEVCRLRDTPIMTFINKLDREGKDPIELLDEVETVLGIQCAPVTWPIGMGQRLKGVVHLLTGEVHLYEPGRNFTRQDSTIFPSIDAPGLAEKIGAQMLADLRDELELVQGASHPFDLEAYRAGKQTPVFFGSGVNNFGVQPLLDFFVEHAPSPQARSTTGREIAPEENKLTGFVFKIQANMDPQHRDRVAFMRVCSGRFSAGMKTFHVRTGKEMKLANALTFMASDREIAAEAWPGDVIGIHNHGTISIGDTFTEGEAVTFTGIPNFAPELFRRARLRDPLKLKQLQKGLAQLSEEGATQFFRPLTSNDLILGAVGVLQFDVAAYRLKDEYGVEATFEPVSVTTARWVHCSNEKKLEEFREKNALNLALDAAGHLVYLAPTRVNLQLAQERSPDVRFSATREAAHTVSVG</sequence>
<proteinExistence type="evidence at protein level"/>
<dbReference type="EMBL" id="AM743169">
    <property type="protein sequence ID" value="CAQ47053.1"/>
    <property type="molecule type" value="Genomic_DNA"/>
</dbReference>
<dbReference type="RefSeq" id="WP_005410681.1">
    <property type="nucleotide sequence ID" value="NC_010943.1"/>
</dbReference>
<dbReference type="PDB" id="7SIQ">
    <property type="method" value="X-ray"/>
    <property type="resolution" value="2.95 A"/>
    <property type="chains" value="A=1-534"/>
</dbReference>
<dbReference type="PDBsum" id="7SIQ"/>
<dbReference type="SMR" id="B2FR00"/>
<dbReference type="EnsemblBacteria" id="CAQ47053">
    <property type="protein sequence ID" value="CAQ47053"/>
    <property type="gene ID" value="Smlt3637"/>
</dbReference>
<dbReference type="KEGG" id="sml:Smlt3637"/>
<dbReference type="eggNOG" id="COG4108">
    <property type="taxonomic scope" value="Bacteria"/>
</dbReference>
<dbReference type="HOGENOM" id="CLU_002794_2_1_6"/>
<dbReference type="Proteomes" id="UP000008840">
    <property type="component" value="Chromosome"/>
</dbReference>
<dbReference type="GO" id="GO:0005829">
    <property type="term" value="C:cytosol"/>
    <property type="evidence" value="ECO:0007669"/>
    <property type="project" value="TreeGrafter"/>
</dbReference>
<dbReference type="GO" id="GO:0005525">
    <property type="term" value="F:GTP binding"/>
    <property type="evidence" value="ECO:0007669"/>
    <property type="project" value="UniProtKB-UniRule"/>
</dbReference>
<dbReference type="GO" id="GO:0003924">
    <property type="term" value="F:GTPase activity"/>
    <property type="evidence" value="ECO:0007669"/>
    <property type="project" value="InterPro"/>
</dbReference>
<dbReference type="GO" id="GO:0097216">
    <property type="term" value="F:guanosine tetraphosphate binding"/>
    <property type="evidence" value="ECO:0007669"/>
    <property type="project" value="UniProtKB-ARBA"/>
</dbReference>
<dbReference type="GO" id="GO:0016150">
    <property type="term" value="F:translation release factor activity, codon nonspecific"/>
    <property type="evidence" value="ECO:0007669"/>
    <property type="project" value="TreeGrafter"/>
</dbReference>
<dbReference type="GO" id="GO:0016149">
    <property type="term" value="F:translation release factor activity, codon specific"/>
    <property type="evidence" value="ECO:0007669"/>
    <property type="project" value="UniProtKB-UniRule"/>
</dbReference>
<dbReference type="GO" id="GO:0006449">
    <property type="term" value="P:regulation of translational termination"/>
    <property type="evidence" value="ECO:0007669"/>
    <property type="project" value="UniProtKB-UniRule"/>
</dbReference>
<dbReference type="CDD" id="cd04169">
    <property type="entry name" value="RF3"/>
    <property type="match status" value="1"/>
</dbReference>
<dbReference type="CDD" id="cd03689">
    <property type="entry name" value="RF3_II"/>
    <property type="match status" value="1"/>
</dbReference>
<dbReference type="CDD" id="cd16259">
    <property type="entry name" value="RF3_III"/>
    <property type="match status" value="1"/>
</dbReference>
<dbReference type="FunFam" id="2.40.30.10:FF:000040">
    <property type="entry name" value="Peptide chain release factor 3"/>
    <property type="match status" value="1"/>
</dbReference>
<dbReference type="FunFam" id="3.30.70.3280:FF:000001">
    <property type="entry name" value="Peptide chain release factor 3"/>
    <property type="match status" value="1"/>
</dbReference>
<dbReference type="FunFam" id="3.40.50.300:FF:000542">
    <property type="entry name" value="Peptide chain release factor 3"/>
    <property type="match status" value="1"/>
</dbReference>
<dbReference type="Gene3D" id="3.40.50.300">
    <property type="entry name" value="P-loop containing nucleotide triphosphate hydrolases"/>
    <property type="match status" value="2"/>
</dbReference>
<dbReference type="Gene3D" id="3.30.70.3280">
    <property type="entry name" value="Peptide chain release factor 3, domain III"/>
    <property type="match status" value="1"/>
</dbReference>
<dbReference type="HAMAP" id="MF_00072">
    <property type="entry name" value="Rel_fac_3"/>
    <property type="match status" value="1"/>
</dbReference>
<dbReference type="InterPro" id="IPR053905">
    <property type="entry name" value="EF-G-like_DII"/>
</dbReference>
<dbReference type="InterPro" id="IPR035647">
    <property type="entry name" value="EFG_III/V"/>
</dbReference>
<dbReference type="InterPro" id="IPR031157">
    <property type="entry name" value="G_TR_CS"/>
</dbReference>
<dbReference type="InterPro" id="IPR027417">
    <property type="entry name" value="P-loop_NTPase"/>
</dbReference>
<dbReference type="InterPro" id="IPR004548">
    <property type="entry name" value="PrfC"/>
</dbReference>
<dbReference type="InterPro" id="IPR032090">
    <property type="entry name" value="RF3_C"/>
</dbReference>
<dbReference type="InterPro" id="IPR038467">
    <property type="entry name" value="RF3_dom_3_sf"/>
</dbReference>
<dbReference type="InterPro" id="IPR041732">
    <property type="entry name" value="RF3_GTP-bd"/>
</dbReference>
<dbReference type="InterPro" id="IPR005225">
    <property type="entry name" value="Small_GTP-bd"/>
</dbReference>
<dbReference type="InterPro" id="IPR000795">
    <property type="entry name" value="T_Tr_GTP-bd_dom"/>
</dbReference>
<dbReference type="InterPro" id="IPR009000">
    <property type="entry name" value="Transl_B-barrel_sf"/>
</dbReference>
<dbReference type="NCBIfam" id="TIGR00503">
    <property type="entry name" value="prfC"/>
    <property type="match status" value="1"/>
</dbReference>
<dbReference type="NCBIfam" id="NF001964">
    <property type="entry name" value="PRK00741.1"/>
    <property type="match status" value="1"/>
</dbReference>
<dbReference type="NCBIfam" id="TIGR00231">
    <property type="entry name" value="small_GTP"/>
    <property type="match status" value="1"/>
</dbReference>
<dbReference type="PANTHER" id="PTHR43556">
    <property type="entry name" value="PEPTIDE CHAIN RELEASE FACTOR RF3"/>
    <property type="match status" value="1"/>
</dbReference>
<dbReference type="PANTHER" id="PTHR43556:SF2">
    <property type="entry name" value="PEPTIDE CHAIN RELEASE FACTOR RF3"/>
    <property type="match status" value="1"/>
</dbReference>
<dbReference type="Pfam" id="PF22042">
    <property type="entry name" value="EF-G_D2"/>
    <property type="match status" value="1"/>
</dbReference>
<dbReference type="Pfam" id="PF00009">
    <property type="entry name" value="GTP_EFTU"/>
    <property type="match status" value="1"/>
</dbReference>
<dbReference type="Pfam" id="PF16658">
    <property type="entry name" value="RF3_C"/>
    <property type="match status" value="1"/>
</dbReference>
<dbReference type="PRINTS" id="PR00315">
    <property type="entry name" value="ELONGATNFCT"/>
</dbReference>
<dbReference type="SUPFAM" id="SSF54980">
    <property type="entry name" value="EF-G C-terminal domain-like"/>
    <property type="match status" value="1"/>
</dbReference>
<dbReference type="SUPFAM" id="SSF52540">
    <property type="entry name" value="P-loop containing nucleoside triphosphate hydrolases"/>
    <property type="match status" value="1"/>
</dbReference>
<dbReference type="SUPFAM" id="SSF50447">
    <property type="entry name" value="Translation proteins"/>
    <property type="match status" value="1"/>
</dbReference>
<dbReference type="PROSITE" id="PS00301">
    <property type="entry name" value="G_TR_1"/>
    <property type="match status" value="1"/>
</dbReference>
<dbReference type="PROSITE" id="PS51722">
    <property type="entry name" value="G_TR_2"/>
    <property type="match status" value="1"/>
</dbReference>
<comment type="function">
    <text evidence="1">Increases the formation of ribosomal termination complexes and stimulates activities of RF-1 and RF-2. It binds guanine nucleotides and has strong preference for UGA stop codons. It may interact directly with the ribosome. The stimulation of RF-1 and RF-2 is significantly reduced by GTP and GDP, but not by GMP.</text>
</comment>
<comment type="subcellular location">
    <subcellularLocation>
        <location evidence="1">Cytoplasm</location>
    </subcellularLocation>
</comment>
<comment type="similarity">
    <text evidence="1">Belongs to the TRAFAC class translation factor GTPase superfamily. Classic translation factor GTPase family. PrfC subfamily.</text>
</comment>
<feature type="chain" id="PRO_1000092504" description="Peptide chain release factor 3">
    <location>
        <begin position="1"/>
        <end position="534"/>
    </location>
</feature>
<feature type="domain" description="tr-type G">
    <location>
        <begin position="9"/>
        <end position="278"/>
    </location>
</feature>
<feature type="binding site" evidence="1">
    <location>
        <begin position="18"/>
        <end position="25"/>
    </location>
    <ligand>
        <name>GTP</name>
        <dbReference type="ChEBI" id="CHEBI:37565"/>
    </ligand>
</feature>
<feature type="binding site" evidence="1">
    <location>
        <begin position="86"/>
        <end position="90"/>
    </location>
    <ligand>
        <name>GTP</name>
        <dbReference type="ChEBI" id="CHEBI:37565"/>
    </ligand>
</feature>
<feature type="binding site" evidence="1">
    <location>
        <begin position="140"/>
        <end position="143"/>
    </location>
    <ligand>
        <name>GTP</name>
        <dbReference type="ChEBI" id="CHEBI:37565"/>
    </ligand>
</feature>
<feature type="helix" evidence="2">
    <location>
        <begin position="3"/>
        <end position="10"/>
    </location>
</feature>
<feature type="strand" evidence="2">
    <location>
        <begin position="11"/>
        <end position="18"/>
    </location>
</feature>
<feature type="helix" evidence="2">
    <location>
        <begin position="24"/>
        <end position="34"/>
    </location>
</feature>
<feature type="helix" evidence="2">
    <location>
        <begin position="38"/>
        <end position="46"/>
    </location>
</feature>
<feature type="helix" evidence="2">
    <location>
        <begin position="56"/>
        <end position="64"/>
    </location>
</feature>
<feature type="strand" evidence="2">
    <location>
        <begin position="71"/>
        <end position="77"/>
    </location>
</feature>
<feature type="strand" evidence="2">
    <location>
        <begin position="80"/>
        <end position="85"/>
    </location>
</feature>
<feature type="helix" evidence="2">
    <location>
        <begin position="95"/>
        <end position="100"/>
    </location>
</feature>
<feature type="helix" evidence="2">
    <location>
        <begin position="101"/>
        <end position="103"/>
    </location>
</feature>
<feature type="strand" evidence="2">
    <location>
        <begin position="105"/>
        <end position="112"/>
    </location>
</feature>
<feature type="turn" evidence="2">
    <location>
        <begin position="113"/>
        <end position="115"/>
    </location>
</feature>
<feature type="helix" evidence="2">
    <location>
        <begin position="119"/>
        <end position="131"/>
    </location>
</feature>
<feature type="strand" evidence="2">
    <location>
        <begin position="135"/>
        <end position="140"/>
    </location>
</feature>
<feature type="helix" evidence="2">
    <location>
        <begin position="149"/>
        <end position="160"/>
    </location>
</feature>
<feature type="strand" evidence="2">
    <location>
        <begin position="163"/>
        <end position="172"/>
    </location>
</feature>
<feature type="helix" evidence="2">
    <location>
        <begin position="174"/>
        <end position="176"/>
    </location>
</feature>
<feature type="strand" evidence="2">
    <location>
        <begin position="179"/>
        <end position="185"/>
    </location>
</feature>
<feature type="strand" evidence="2">
    <location>
        <begin position="188"/>
        <end position="190"/>
    </location>
</feature>
<feature type="strand" evidence="2">
    <location>
        <begin position="198"/>
        <end position="202"/>
    </location>
</feature>
<feature type="strand" evidence="2">
    <location>
        <begin position="204"/>
        <end position="206"/>
    </location>
</feature>
<feature type="helix" evidence="2">
    <location>
        <begin position="214"/>
        <end position="217"/>
    </location>
</feature>
<feature type="helix" evidence="2">
    <location>
        <begin position="219"/>
        <end position="233"/>
    </location>
</feature>
<feature type="helix" evidence="2">
    <location>
        <begin position="241"/>
        <end position="245"/>
    </location>
</feature>
<feature type="strand" evidence="2">
    <location>
        <begin position="248"/>
        <end position="254"/>
    </location>
</feature>
<feature type="helix" evidence="2">
    <location>
        <begin position="257"/>
        <end position="259"/>
    </location>
</feature>
<feature type="helix" evidence="2">
    <location>
        <begin position="263"/>
        <end position="273"/>
    </location>
</feature>
<feature type="strand" evidence="2">
    <location>
        <begin position="280"/>
        <end position="287"/>
    </location>
</feature>
<feature type="strand" evidence="2">
    <location>
        <begin position="295"/>
        <end position="303"/>
    </location>
</feature>
<feature type="strand" evidence="2">
    <location>
        <begin position="312"/>
        <end position="321"/>
    </location>
</feature>
<feature type="strand" evidence="2">
    <location>
        <begin position="328"/>
        <end position="331"/>
    </location>
</feature>
<feature type="turn" evidence="2">
    <location>
        <begin position="332"/>
        <end position="334"/>
    </location>
</feature>
<feature type="strand" evidence="2">
    <location>
        <begin position="337"/>
        <end position="339"/>
    </location>
</feature>
<feature type="strand" evidence="2">
    <location>
        <begin position="355"/>
        <end position="357"/>
    </location>
</feature>
<feature type="strand" evidence="2">
    <location>
        <begin position="362"/>
        <end position="367"/>
    </location>
</feature>
<feature type="strand" evidence="2">
    <location>
        <begin position="376"/>
        <end position="380"/>
    </location>
</feature>
<feature type="strand" evidence="2">
    <location>
        <begin position="389"/>
        <end position="391"/>
    </location>
</feature>
<feature type="strand" evidence="2">
    <location>
        <begin position="394"/>
        <end position="403"/>
    </location>
</feature>
<feature type="helix" evidence="2">
    <location>
        <begin position="404"/>
        <end position="406"/>
    </location>
</feature>
<feature type="helix" evidence="2">
    <location>
        <begin position="407"/>
        <end position="419"/>
    </location>
</feature>
<feature type="strand" evidence="2">
    <location>
        <begin position="424"/>
        <end position="428"/>
    </location>
</feature>
<feature type="strand" evidence="2">
    <location>
        <begin position="435"/>
        <end position="440"/>
    </location>
</feature>
<feature type="helix" evidence="2">
    <location>
        <begin position="442"/>
        <end position="453"/>
    </location>
</feature>
<feature type="strand" evidence="2">
    <location>
        <begin position="459"/>
        <end position="463"/>
    </location>
</feature>
<feature type="strand" evidence="2">
    <location>
        <begin position="468"/>
        <end position="473"/>
    </location>
</feature>
<feature type="helix" evidence="2">
    <location>
        <begin position="477"/>
        <end position="484"/>
    </location>
</feature>
<feature type="helix" evidence="2">
    <location>
        <begin position="488"/>
        <end position="490"/>
    </location>
</feature>
<feature type="strand" evidence="2">
    <location>
        <begin position="491"/>
        <end position="493"/>
    </location>
</feature>
<feature type="strand" evidence="2">
    <location>
        <begin position="499"/>
        <end position="505"/>
    </location>
</feature>
<feature type="helix" evidence="2">
    <location>
        <begin position="506"/>
        <end position="515"/>
    </location>
</feature>
<feature type="strand" evidence="2">
    <location>
        <begin position="520"/>
        <end position="526"/>
    </location>
</feature>
<feature type="turn" evidence="2">
    <location>
        <begin position="527"/>
        <end position="529"/>
    </location>
</feature>
<protein>
    <recommendedName>
        <fullName evidence="1">Peptide chain release factor 3</fullName>
        <shortName evidence="1">RF-3</shortName>
    </recommendedName>
</protein>
<keyword id="KW-0002">3D-structure</keyword>
<keyword id="KW-0963">Cytoplasm</keyword>
<keyword id="KW-0342">GTP-binding</keyword>
<keyword id="KW-0547">Nucleotide-binding</keyword>
<keyword id="KW-0648">Protein biosynthesis</keyword>
<keyword id="KW-1185">Reference proteome</keyword>
<reference key="1">
    <citation type="journal article" date="2008" name="Genome Biol.">
        <title>The complete genome, comparative and functional analysis of Stenotrophomonas maltophilia reveals an organism heavily shielded by drug resistance determinants.</title>
        <authorList>
            <person name="Crossman L.C."/>
            <person name="Gould V.C."/>
            <person name="Dow J.M."/>
            <person name="Vernikos G.S."/>
            <person name="Okazaki A."/>
            <person name="Sebaihia M."/>
            <person name="Saunders D."/>
            <person name="Arrowsmith C."/>
            <person name="Carver T."/>
            <person name="Peters N."/>
            <person name="Adlem E."/>
            <person name="Kerhornou A."/>
            <person name="Lord A."/>
            <person name="Murphy L."/>
            <person name="Seeger K."/>
            <person name="Squares R."/>
            <person name="Rutter S."/>
            <person name="Quail M.A."/>
            <person name="Rajandream M.A."/>
            <person name="Harris D."/>
            <person name="Churcher C."/>
            <person name="Bentley S.D."/>
            <person name="Parkhill J."/>
            <person name="Thomson N.R."/>
            <person name="Avison M.B."/>
        </authorList>
    </citation>
    <scope>NUCLEOTIDE SEQUENCE [LARGE SCALE GENOMIC DNA]</scope>
    <source>
        <strain>K279a</strain>
    </source>
</reference>
<gene>
    <name evidence="1" type="primary">prfC</name>
    <name type="ordered locus">Smlt3637</name>
</gene>
<accession>B2FR00</accession>
<evidence type="ECO:0000255" key="1">
    <source>
        <dbReference type="HAMAP-Rule" id="MF_00072"/>
    </source>
</evidence>
<evidence type="ECO:0007829" key="2">
    <source>
        <dbReference type="PDB" id="7SIQ"/>
    </source>
</evidence>
<name>RF3_STRMK</name>